<proteinExistence type="inferred from homology"/>
<organism>
    <name type="scientific">Anaeromyxobacter sp. (strain K)</name>
    <dbReference type="NCBI Taxonomy" id="447217"/>
    <lineage>
        <taxon>Bacteria</taxon>
        <taxon>Pseudomonadati</taxon>
        <taxon>Myxococcota</taxon>
        <taxon>Myxococcia</taxon>
        <taxon>Myxococcales</taxon>
        <taxon>Cystobacterineae</taxon>
        <taxon>Anaeromyxobacteraceae</taxon>
        <taxon>Anaeromyxobacter</taxon>
    </lineage>
</organism>
<gene>
    <name type="ordered locus">AnaeK_4073</name>
</gene>
<accession>B4UGJ6</accession>
<sequence length="197" mass="20268">MPQDAPAGLAPGFLVAAPALADPNFNGSLVLMAEHHAQGALGFVVNRPGPITVADVLGGLDAGLRERAEGAGRADDLVLVGGPVQPERLWILFRPGPAAPEEGAVALGAGLALGGSRELLEALVRARDPGPYLLLLGYAGWAPLQVEREVGEGAWVPLPLQGDLVFDVPMEKRWETAVRRLGLDPAGFLVGGGGAEA</sequence>
<evidence type="ECO:0000255" key="1">
    <source>
        <dbReference type="HAMAP-Rule" id="MF_00758"/>
    </source>
</evidence>
<dbReference type="EMBL" id="CP001131">
    <property type="protein sequence ID" value="ACG75278.1"/>
    <property type="molecule type" value="Genomic_DNA"/>
</dbReference>
<dbReference type="RefSeq" id="WP_012528031.1">
    <property type="nucleotide sequence ID" value="NC_011145.1"/>
</dbReference>
<dbReference type="SMR" id="B4UGJ6"/>
<dbReference type="KEGG" id="ank:AnaeK_4073"/>
<dbReference type="HOGENOM" id="CLU_057596_1_0_7"/>
<dbReference type="OrthoDB" id="9807486at2"/>
<dbReference type="Proteomes" id="UP000001871">
    <property type="component" value="Chromosome"/>
</dbReference>
<dbReference type="GO" id="GO:0005829">
    <property type="term" value="C:cytosol"/>
    <property type="evidence" value="ECO:0007669"/>
    <property type="project" value="TreeGrafter"/>
</dbReference>
<dbReference type="Gene3D" id="3.40.1740.10">
    <property type="entry name" value="VC0467-like"/>
    <property type="match status" value="1"/>
</dbReference>
<dbReference type="HAMAP" id="MF_00758">
    <property type="entry name" value="UPF0301"/>
    <property type="match status" value="1"/>
</dbReference>
<dbReference type="InterPro" id="IPR003774">
    <property type="entry name" value="AlgH-like"/>
</dbReference>
<dbReference type="PANTHER" id="PTHR30327">
    <property type="entry name" value="UNCHARACTERIZED PROTEIN YQGE"/>
    <property type="match status" value="1"/>
</dbReference>
<dbReference type="PANTHER" id="PTHR30327:SF1">
    <property type="entry name" value="UPF0301 PROTEIN YQGE"/>
    <property type="match status" value="1"/>
</dbReference>
<dbReference type="Pfam" id="PF02622">
    <property type="entry name" value="DUF179"/>
    <property type="match status" value="1"/>
</dbReference>
<dbReference type="SUPFAM" id="SSF143456">
    <property type="entry name" value="VC0467-like"/>
    <property type="match status" value="1"/>
</dbReference>
<reference key="1">
    <citation type="submission" date="2008-08" db="EMBL/GenBank/DDBJ databases">
        <title>Complete sequence of Anaeromyxobacter sp. K.</title>
        <authorList>
            <consortium name="US DOE Joint Genome Institute"/>
            <person name="Lucas S."/>
            <person name="Copeland A."/>
            <person name="Lapidus A."/>
            <person name="Glavina del Rio T."/>
            <person name="Dalin E."/>
            <person name="Tice H."/>
            <person name="Bruce D."/>
            <person name="Goodwin L."/>
            <person name="Pitluck S."/>
            <person name="Saunders E."/>
            <person name="Brettin T."/>
            <person name="Detter J.C."/>
            <person name="Han C."/>
            <person name="Larimer F."/>
            <person name="Land M."/>
            <person name="Hauser L."/>
            <person name="Kyrpides N."/>
            <person name="Ovchinnikiva G."/>
            <person name="Beliaev A."/>
        </authorList>
    </citation>
    <scope>NUCLEOTIDE SEQUENCE [LARGE SCALE GENOMIC DNA]</scope>
    <source>
        <strain>K</strain>
    </source>
</reference>
<feature type="chain" id="PRO_1000198252" description="UPF0301 protein AnaeK_4073">
    <location>
        <begin position="1"/>
        <end position="197"/>
    </location>
</feature>
<name>Y4073_ANASK</name>
<protein>
    <recommendedName>
        <fullName evidence="1">UPF0301 protein AnaeK_4073</fullName>
    </recommendedName>
</protein>
<comment type="similarity">
    <text evidence="1">Belongs to the UPF0301 (AlgH) family.</text>
</comment>